<keyword id="KW-0067">ATP-binding</keyword>
<keyword id="KW-0238">DNA-binding</keyword>
<keyword id="KW-0479">Metal-binding</keyword>
<keyword id="KW-0547">Nucleotide-binding</keyword>
<keyword id="KW-1185">Reference proteome</keyword>
<keyword id="KW-0678">Repressor</keyword>
<keyword id="KW-0804">Transcription</keyword>
<keyword id="KW-0805">Transcription regulation</keyword>
<keyword id="KW-0862">Zinc</keyword>
<keyword id="KW-0863">Zinc-finger</keyword>
<dbReference type="EMBL" id="CP000781">
    <property type="protein sequence ID" value="ABS69498.1"/>
    <property type="molecule type" value="Genomic_DNA"/>
</dbReference>
<dbReference type="SMR" id="A7INA4"/>
<dbReference type="STRING" id="78245.Xaut_4277"/>
<dbReference type="KEGG" id="xau:Xaut_4277"/>
<dbReference type="eggNOG" id="COG1327">
    <property type="taxonomic scope" value="Bacteria"/>
</dbReference>
<dbReference type="HOGENOM" id="CLU_108412_0_1_5"/>
<dbReference type="OrthoDB" id="9807461at2"/>
<dbReference type="PhylomeDB" id="A7INA4"/>
<dbReference type="Proteomes" id="UP000002417">
    <property type="component" value="Chromosome"/>
</dbReference>
<dbReference type="GO" id="GO:0005524">
    <property type="term" value="F:ATP binding"/>
    <property type="evidence" value="ECO:0007669"/>
    <property type="project" value="UniProtKB-KW"/>
</dbReference>
<dbReference type="GO" id="GO:0003677">
    <property type="term" value="F:DNA binding"/>
    <property type="evidence" value="ECO:0007669"/>
    <property type="project" value="UniProtKB-KW"/>
</dbReference>
<dbReference type="GO" id="GO:0008270">
    <property type="term" value="F:zinc ion binding"/>
    <property type="evidence" value="ECO:0007669"/>
    <property type="project" value="UniProtKB-UniRule"/>
</dbReference>
<dbReference type="GO" id="GO:0045892">
    <property type="term" value="P:negative regulation of DNA-templated transcription"/>
    <property type="evidence" value="ECO:0007669"/>
    <property type="project" value="UniProtKB-UniRule"/>
</dbReference>
<dbReference type="HAMAP" id="MF_00440">
    <property type="entry name" value="NrdR"/>
    <property type="match status" value="1"/>
</dbReference>
<dbReference type="InterPro" id="IPR005144">
    <property type="entry name" value="ATP-cone_dom"/>
</dbReference>
<dbReference type="InterPro" id="IPR055173">
    <property type="entry name" value="NrdR-like_N"/>
</dbReference>
<dbReference type="InterPro" id="IPR003796">
    <property type="entry name" value="RNR_NrdR-like"/>
</dbReference>
<dbReference type="NCBIfam" id="TIGR00244">
    <property type="entry name" value="transcriptional regulator NrdR"/>
    <property type="match status" value="1"/>
</dbReference>
<dbReference type="PANTHER" id="PTHR30455">
    <property type="entry name" value="TRANSCRIPTIONAL REPRESSOR NRDR"/>
    <property type="match status" value="1"/>
</dbReference>
<dbReference type="PANTHER" id="PTHR30455:SF2">
    <property type="entry name" value="TRANSCRIPTIONAL REPRESSOR NRDR"/>
    <property type="match status" value="1"/>
</dbReference>
<dbReference type="Pfam" id="PF03477">
    <property type="entry name" value="ATP-cone"/>
    <property type="match status" value="1"/>
</dbReference>
<dbReference type="Pfam" id="PF22811">
    <property type="entry name" value="Zn_ribbon_NrdR"/>
    <property type="match status" value="1"/>
</dbReference>
<dbReference type="PROSITE" id="PS51161">
    <property type="entry name" value="ATP_CONE"/>
    <property type="match status" value="1"/>
</dbReference>
<feature type="chain" id="PRO_1000124565" description="Transcriptional repressor NrdR">
    <location>
        <begin position="1"/>
        <end position="182"/>
    </location>
</feature>
<feature type="domain" description="ATP-cone" evidence="1">
    <location>
        <begin position="49"/>
        <end position="139"/>
    </location>
</feature>
<feature type="zinc finger region" evidence="1">
    <location>
        <begin position="3"/>
        <end position="34"/>
    </location>
</feature>
<feature type="region of interest" description="Disordered" evidence="2">
    <location>
        <begin position="1"/>
        <end position="24"/>
    </location>
</feature>
<feature type="region of interest" description="Disordered" evidence="2">
    <location>
        <begin position="146"/>
        <end position="182"/>
    </location>
</feature>
<feature type="compositionally biased region" description="Basic and acidic residues" evidence="2">
    <location>
        <begin position="12"/>
        <end position="24"/>
    </location>
</feature>
<feature type="compositionally biased region" description="Basic and acidic residues" evidence="2">
    <location>
        <begin position="156"/>
        <end position="172"/>
    </location>
</feature>
<accession>A7INA4</accession>
<sequence length="182" mass="20481">MRCPYCGGLDTQVRDSRPTEDNTAIRRRRICPDCGGRFTTFERVQLRELMVLKRSGRRVPFDRDKLARSVDVALRKRPVDGERVERMLSGIVRQLESMGDSDITSQTIGEMVMEGLKQLDDVAYVRFASVYRNFREAKDFENALAELSQPELAQSDDVKAEGGAEGGRDKPKAAGKPPRSAE</sequence>
<comment type="function">
    <text evidence="1">Negatively regulates transcription of bacterial ribonucleotide reductase nrd genes and operons by binding to NrdR-boxes.</text>
</comment>
<comment type="cofactor">
    <cofactor evidence="1">
        <name>Zn(2+)</name>
        <dbReference type="ChEBI" id="CHEBI:29105"/>
    </cofactor>
    <text evidence="1">Binds 1 zinc ion.</text>
</comment>
<comment type="similarity">
    <text evidence="1">Belongs to the NrdR family.</text>
</comment>
<evidence type="ECO:0000255" key="1">
    <source>
        <dbReference type="HAMAP-Rule" id="MF_00440"/>
    </source>
</evidence>
<evidence type="ECO:0000256" key="2">
    <source>
        <dbReference type="SAM" id="MobiDB-lite"/>
    </source>
</evidence>
<protein>
    <recommendedName>
        <fullName evidence="1">Transcriptional repressor NrdR</fullName>
    </recommendedName>
</protein>
<proteinExistence type="inferred from homology"/>
<organism>
    <name type="scientific">Xanthobacter autotrophicus (strain ATCC BAA-1158 / Py2)</name>
    <dbReference type="NCBI Taxonomy" id="78245"/>
    <lineage>
        <taxon>Bacteria</taxon>
        <taxon>Pseudomonadati</taxon>
        <taxon>Pseudomonadota</taxon>
        <taxon>Alphaproteobacteria</taxon>
        <taxon>Hyphomicrobiales</taxon>
        <taxon>Xanthobacteraceae</taxon>
        <taxon>Xanthobacter</taxon>
    </lineage>
</organism>
<name>NRDR_XANP2</name>
<gene>
    <name evidence="1" type="primary">nrdR</name>
    <name type="ordered locus">Xaut_4277</name>
</gene>
<reference key="1">
    <citation type="submission" date="2007-07" db="EMBL/GenBank/DDBJ databases">
        <title>Complete sequence of chromosome of Xanthobacter autotrophicus Py2.</title>
        <authorList>
            <consortium name="US DOE Joint Genome Institute"/>
            <person name="Copeland A."/>
            <person name="Lucas S."/>
            <person name="Lapidus A."/>
            <person name="Barry K."/>
            <person name="Glavina del Rio T."/>
            <person name="Hammon N."/>
            <person name="Israni S."/>
            <person name="Dalin E."/>
            <person name="Tice H."/>
            <person name="Pitluck S."/>
            <person name="Sims D."/>
            <person name="Brettin T."/>
            <person name="Bruce D."/>
            <person name="Detter J.C."/>
            <person name="Han C."/>
            <person name="Tapia R."/>
            <person name="Brainard J."/>
            <person name="Schmutz J."/>
            <person name="Larimer F."/>
            <person name="Land M."/>
            <person name="Hauser L."/>
            <person name="Kyrpides N."/>
            <person name="Kim E."/>
            <person name="Ensigns S.A."/>
            <person name="Richardson P."/>
        </authorList>
    </citation>
    <scope>NUCLEOTIDE SEQUENCE [LARGE SCALE GENOMIC DNA]</scope>
    <source>
        <strain>ATCC BAA-1158 / Py2</strain>
    </source>
</reference>